<accession>A0K5L8</accession>
<reference key="1">
    <citation type="submission" date="2006-08" db="EMBL/GenBank/DDBJ databases">
        <title>Complete sequence of chromosome 1 of Burkholderia cenocepacia HI2424.</title>
        <authorList>
            <person name="Copeland A."/>
            <person name="Lucas S."/>
            <person name="Lapidus A."/>
            <person name="Barry K."/>
            <person name="Detter J.C."/>
            <person name="Glavina del Rio T."/>
            <person name="Hammon N."/>
            <person name="Israni S."/>
            <person name="Pitluck S."/>
            <person name="Chain P."/>
            <person name="Malfatti S."/>
            <person name="Shin M."/>
            <person name="Vergez L."/>
            <person name="Schmutz J."/>
            <person name="Larimer F."/>
            <person name="Land M."/>
            <person name="Hauser L."/>
            <person name="Kyrpides N."/>
            <person name="Kim E."/>
            <person name="LiPuma J.J."/>
            <person name="Gonzalez C.F."/>
            <person name="Konstantinidis K."/>
            <person name="Tiedje J.M."/>
            <person name="Richardson P."/>
        </authorList>
    </citation>
    <scope>NUCLEOTIDE SEQUENCE [LARGE SCALE GENOMIC DNA]</scope>
    <source>
        <strain>HI2424</strain>
    </source>
</reference>
<comment type="function">
    <text evidence="1">Catalyzes the reversible conversion of 3-phosphohydroxypyruvate to phosphoserine and of 3-hydroxy-2-oxo-4-phosphonooxybutanoate to phosphohydroxythreonine.</text>
</comment>
<comment type="catalytic activity">
    <reaction evidence="1">
        <text>O-phospho-L-serine + 2-oxoglutarate = 3-phosphooxypyruvate + L-glutamate</text>
        <dbReference type="Rhea" id="RHEA:14329"/>
        <dbReference type="ChEBI" id="CHEBI:16810"/>
        <dbReference type="ChEBI" id="CHEBI:18110"/>
        <dbReference type="ChEBI" id="CHEBI:29985"/>
        <dbReference type="ChEBI" id="CHEBI:57524"/>
        <dbReference type="EC" id="2.6.1.52"/>
    </reaction>
</comment>
<comment type="catalytic activity">
    <reaction evidence="1">
        <text>4-(phosphooxy)-L-threonine + 2-oxoglutarate = (R)-3-hydroxy-2-oxo-4-phosphooxybutanoate + L-glutamate</text>
        <dbReference type="Rhea" id="RHEA:16573"/>
        <dbReference type="ChEBI" id="CHEBI:16810"/>
        <dbReference type="ChEBI" id="CHEBI:29985"/>
        <dbReference type="ChEBI" id="CHEBI:58452"/>
        <dbReference type="ChEBI" id="CHEBI:58538"/>
        <dbReference type="EC" id="2.6.1.52"/>
    </reaction>
</comment>
<comment type="cofactor">
    <cofactor evidence="1">
        <name>pyridoxal 5'-phosphate</name>
        <dbReference type="ChEBI" id="CHEBI:597326"/>
    </cofactor>
    <text evidence="1">Binds 1 pyridoxal phosphate per subunit.</text>
</comment>
<comment type="pathway">
    <text evidence="1">Amino-acid biosynthesis; L-serine biosynthesis; L-serine from 3-phospho-D-glycerate: step 2/3.</text>
</comment>
<comment type="pathway">
    <text evidence="1">Cofactor biosynthesis; pyridoxine 5'-phosphate biosynthesis; pyridoxine 5'-phosphate from D-erythrose 4-phosphate: step 3/5.</text>
</comment>
<comment type="subunit">
    <text evidence="1">Homodimer.</text>
</comment>
<comment type="subcellular location">
    <subcellularLocation>
        <location evidence="1">Cytoplasm</location>
    </subcellularLocation>
</comment>
<comment type="similarity">
    <text evidence="1">Belongs to the class-V pyridoxal-phosphate-dependent aminotransferase family. SerC subfamily.</text>
</comment>
<organism>
    <name type="scientific">Burkholderia cenocepacia (strain HI2424)</name>
    <dbReference type="NCBI Taxonomy" id="331272"/>
    <lineage>
        <taxon>Bacteria</taxon>
        <taxon>Pseudomonadati</taxon>
        <taxon>Pseudomonadota</taxon>
        <taxon>Betaproteobacteria</taxon>
        <taxon>Burkholderiales</taxon>
        <taxon>Burkholderiaceae</taxon>
        <taxon>Burkholderia</taxon>
        <taxon>Burkholderia cepacia complex</taxon>
    </lineage>
</organism>
<proteinExistence type="inferred from homology"/>
<feature type="chain" id="PRO_1000058203" description="Phosphoserine aminotransferase">
    <location>
        <begin position="1"/>
        <end position="360"/>
    </location>
</feature>
<feature type="binding site" evidence="1">
    <location>
        <position position="41"/>
    </location>
    <ligand>
        <name>L-glutamate</name>
        <dbReference type="ChEBI" id="CHEBI:29985"/>
    </ligand>
</feature>
<feature type="binding site" evidence="1">
    <location>
        <position position="101"/>
    </location>
    <ligand>
        <name>pyridoxal 5'-phosphate</name>
        <dbReference type="ChEBI" id="CHEBI:597326"/>
    </ligand>
</feature>
<feature type="binding site" evidence="1">
    <location>
        <position position="152"/>
    </location>
    <ligand>
        <name>pyridoxal 5'-phosphate</name>
        <dbReference type="ChEBI" id="CHEBI:597326"/>
    </ligand>
</feature>
<feature type="binding site" evidence="1">
    <location>
        <position position="172"/>
    </location>
    <ligand>
        <name>pyridoxal 5'-phosphate</name>
        <dbReference type="ChEBI" id="CHEBI:597326"/>
    </ligand>
</feature>
<feature type="binding site" evidence="1">
    <location>
        <position position="195"/>
    </location>
    <ligand>
        <name>pyridoxal 5'-phosphate</name>
        <dbReference type="ChEBI" id="CHEBI:597326"/>
    </ligand>
</feature>
<feature type="binding site" evidence="1">
    <location>
        <begin position="237"/>
        <end position="238"/>
    </location>
    <ligand>
        <name>pyridoxal 5'-phosphate</name>
        <dbReference type="ChEBI" id="CHEBI:597326"/>
    </ligand>
</feature>
<feature type="modified residue" description="N6-(pyridoxal phosphate)lysine" evidence="1">
    <location>
        <position position="196"/>
    </location>
</feature>
<protein>
    <recommendedName>
        <fullName evidence="1">Phosphoserine aminotransferase</fullName>
        <ecNumber evidence="1">2.6.1.52</ecNumber>
    </recommendedName>
    <alternativeName>
        <fullName evidence="1">Phosphohydroxythreonine aminotransferase</fullName>
        <shortName evidence="1">PSAT</shortName>
    </alternativeName>
</protein>
<keyword id="KW-0028">Amino-acid biosynthesis</keyword>
<keyword id="KW-0032">Aminotransferase</keyword>
<keyword id="KW-0963">Cytoplasm</keyword>
<keyword id="KW-0663">Pyridoxal phosphate</keyword>
<keyword id="KW-0664">Pyridoxine biosynthesis</keyword>
<keyword id="KW-0718">Serine biosynthesis</keyword>
<keyword id="KW-0808">Transferase</keyword>
<dbReference type="EC" id="2.6.1.52" evidence="1"/>
<dbReference type="EMBL" id="CP000458">
    <property type="protein sequence ID" value="ABK07795.1"/>
    <property type="molecule type" value="Genomic_DNA"/>
</dbReference>
<dbReference type="RefSeq" id="WP_011544881.1">
    <property type="nucleotide sequence ID" value="NC_008542.1"/>
</dbReference>
<dbReference type="SMR" id="A0K5L8"/>
<dbReference type="KEGG" id="bch:Bcen2424_1042"/>
<dbReference type="HOGENOM" id="CLU_034866_0_2_4"/>
<dbReference type="UniPathway" id="UPA00135">
    <property type="reaction ID" value="UER00197"/>
</dbReference>
<dbReference type="UniPathway" id="UPA00244">
    <property type="reaction ID" value="UER00311"/>
</dbReference>
<dbReference type="GO" id="GO:0005737">
    <property type="term" value="C:cytoplasm"/>
    <property type="evidence" value="ECO:0007669"/>
    <property type="project" value="UniProtKB-SubCell"/>
</dbReference>
<dbReference type="GO" id="GO:0004648">
    <property type="term" value="F:O-phospho-L-serine:2-oxoglutarate aminotransferase activity"/>
    <property type="evidence" value="ECO:0007669"/>
    <property type="project" value="UniProtKB-UniRule"/>
</dbReference>
<dbReference type="GO" id="GO:0030170">
    <property type="term" value="F:pyridoxal phosphate binding"/>
    <property type="evidence" value="ECO:0007669"/>
    <property type="project" value="UniProtKB-UniRule"/>
</dbReference>
<dbReference type="GO" id="GO:0006564">
    <property type="term" value="P:L-serine biosynthetic process"/>
    <property type="evidence" value="ECO:0007669"/>
    <property type="project" value="UniProtKB-UniRule"/>
</dbReference>
<dbReference type="GO" id="GO:0008615">
    <property type="term" value="P:pyridoxine biosynthetic process"/>
    <property type="evidence" value="ECO:0007669"/>
    <property type="project" value="UniProtKB-UniRule"/>
</dbReference>
<dbReference type="CDD" id="cd00611">
    <property type="entry name" value="PSAT_like"/>
    <property type="match status" value="1"/>
</dbReference>
<dbReference type="FunFam" id="3.40.640.10:FF:000010">
    <property type="entry name" value="Phosphoserine aminotransferase"/>
    <property type="match status" value="1"/>
</dbReference>
<dbReference type="FunFam" id="3.90.1150.10:FF:000006">
    <property type="entry name" value="Phosphoserine aminotransferase"/>
    <property type="match status" value="1"/>
</dbReference>
<dbReference type="Gene3D" id="3.90.1150.10">
    <property type="entry name" value="Aspartate Aminotransferase, domain 1"/>
    <property type="match status" value="1"/>
</dbReference>
<dbReference type="Gene3D" id="3.40.640.10">
    <property type="entry name" value="Type I PLP-dependent aspartate aminotransferase-like (Major domain)"/>
    <property type="match status" value="1"/>
</dbReference>
<dbReference type="HAMAP" id="MF_00160">
    <property type="entry name" value="SerC_aminotrans_5"/>
    <property type="match status" value="1"/>
</dbReference>
<dbReference type="InterPro" id="IPR000192">
    <property type="entry name" value="Aminotrans_V_dom"/>
</dbReference>
<dbReference type="InterPro" id="IPR020578">
    <property type="entry name" value="Aminotrans_V_PyrdxlP_BS"/>
</dbReference>
<dbReference type="InterPro" id="IPR022278">
    <property type="entry name" value="Pser_aminoTfrase"/>
</dbReference>
<dbReference type="InterPro" id="IPR015424">
    <property type="entry name" value="PyrdxlP-dep_Trfase"/>
</dbReference>
<dbReference type="InterPro" id="IPR015421">
    <property type="entry name" value="PyrdxlP-dep_Trfase_major"/>
</dbReference>
<dbReference type="InterPro" id="IPR015422">
    <property type="entry name" value="PyrdxlP-dep_Trfase_small"/>
</dbReference>
<dbReference type="NCBIfam" id="NF003764">
    <property type="entry name" value="PRK05355.1"/>
    <property type="match status" value="1"/>
</dbReference>
<dbReference type="NCBIfam" id="TIGR01364">
    <property type="entry name" value="serC_1"/>
    <property type="match status" value="1"/>
</dbReference>
<dbReference type="PANTHER" id="PTHR43247">
    <property type="entry name" value="PHOSPHOSERINE AMINOTRANSFERASE"/>
    <property type="match status" value="1"/>
</dbReference>
<dbReference type="PANTHER" id="PTHR43247:SF1">
    <property type="entry name" value="PHOSPHOSERINE AMINOTRANSFERASE"/>
    <property type="match status" value="1"/>
</dbReference>
<dbReference type="Pfam" id="PF00266">
    <property type="entry name" value="Aminotran_5"/>
    <property type="match status" value="1"/>
</dbReference>
<dbReference type="PIRSF" id="PIRSF000525">
    <property type="entry name" value="SerC"/>
    <property type="match status" value="1"/>
</dbReference>
<dbReference type="SUPFAM" id="SSF53383">
    <property type="entry name" value="PLP-dependent transferases"/>
    <property type="match status" value="1"/>
</dbReference>
<dbReference type="PROSITE" id="PS00595">
    <property type="entry name" value="AA_TRANSFER_CLASS_5"/>
    <property type="match status" value="1"/>
</dbReference>
<gene>
    <name evidence="1" type="primary">serC</name>
    <name type="ordered locus">Bcen2424_1042</name>
</gene>
<name>SERC_BURCH</name>
<sequence>MRVFNFSAGPAAMPEEVLRQAADEMLDWHGSGMSVMEMSHRGKEFMSIHEAALTDLRDLLGVPASHRILFLQGGGIAENAIVPMNLLGARKTADFVVTGSWSQKSFGEAKKFCAPHLAASGKTEAGFTRAPARAEWQLSDDPAYVHLCTNETIDGVETFEIPDLGDVPLVADVSSHILSRPMDVAKYGVLFGGAQKNIGMAGVTVVIVREDLLDRALSICPSAFEWKTIAANNSLYNTPPTYAIYIAGLVFQWLKRQGGLEAIEARNIEKSKLLYDTIDASSFYLNKVEPAARSRMNVPFFLADETRNEDFLAGAKARGLLQLKGHKSVGGMRASIYNAVPLEGVKALVEYMKDFEQRGA</sequence>
<evidence type="ECO:0000255" key="1">
    <source>
        <dbReference type="HAMAP-Rule" id="MF_00160"/>
    </source>
</evidence>